<name>TRUA_ENT38</name>
<accession>A4WCV2</accession>
<reference key="1">
    <citation type="journal article" date="2010" name="PLoS Genet.">
        <title>Genome sequence of the plant growth promoting endophytic bacterium Enterobacter sp. 638.</title>
        <authorList>
            <person name="Taghavi S."/>
            <person name="van der Lelie D."/>
            <person name="Hoffman A."/>
            <person name="Zhang Y.B."/>
            <person name="Walla M.D."/>
            <person name="Vangronsveld J."/>
            <person name="Newman L."/>
            <person name="Monchy S."/>
        </authorList>
    </citation>
    <scope>NUCLEOTIDE SEQUENCE [LARGE SCALE GENOMIC DNA]</scope>
    <source>
        <strain>638</strain>
    </source>
</reference>
<organism>
    <name type="scientific">Enterobacter sp. (strain 638)</name>
    <dbReference type="NCBI Taxonomy" id="399742"/>
    <lineage>
        <taxon>Bacteria</taxon>
        <taxon>Pseudomonadati</taxon>
        <taxon>Pseudomonadota</taxon>
        <taxon>Gammaproteobacteria</taxon>
        <taxon>Enterobacterales</taxon>
        <taxon>Enterobacteriaceae</taxon>
        <taxon>Enterobacter</taxon>
    </lineage>
</organism>
<keyword id="KW-0413">Isomerase</keyword>
<keyword id="KW-0819">tRNA processing</keyword>
<sequence length="270" mass="30223">MSEVELKPVHRIALGIEYDGSKYYGWQRQNEVRSVQEKLEKALSQVANQPIAVCCAGRTDAGVHGTGQVVHFETTSVRKDAAWTLGVNANLPGDIAVRWVKDVPDDFHARFSATARRYRYIIYNQRLRPAVLGQGVTHFYEPLDAERMQRAAQSLIGENDFTSFRAVQCQSRTPWRNVMHINVSRYGAYVVVDIKANAFVHHMVRNIVGSLMEVGAGHQPESWIAELLAAKDRTLAAATAKAEGLYLVSVDYPERFDLPKPPMGPLFLAD</sequence>
<feature type="chain" id="PRO_1000058306" description="tRNA pseudouridine synthase A">
    <location>
        <begin position="1"/>
        <end position="270"/>
    </location>
</feature>
<feature type="region of interest" description="RNA binding" evidence="1">
    <location>
        <begin position="107"/>
        <end position="111"/>
    </location>
</feature>
<feature type="region of interest" description="Interaction with tRNA" evidence="1">
    <location>
        <begin position="168"/>
        <end position="172"/>
    </location>
</feature>
<feature type="active site" description="Nucleophile" evidence="1">
    <location>
        <position position="60"/>
    </location>
</feature>
<feature type="binding site" evidence="1">
    <location>
        <position position="118"/>
    </location>
    <ligand>
        <name>substrate</name>
    </ligand>
</feature>
<feature type="site" description="Interaction with tRNA; Important for base-flipping" evidence="1">
    <location>
        <position position="58"/>
    </location>
</feature>
<feature type="site" description="Interaction with tRNA" evidence="1">
    <location>
        <position position="78"/>
    </location>
</feature>
<feature type="site" description="Interaction with tRNA" evidence="1">
    <location>
        <position position="110"/>
    </location>
</feature>
<feature type="site" description="Interaction with tRNA" evidence="1">
    <location>
        <position position="126"/>
    </location>
</feature>
<feature type="site" description="Interaction with tRNA" evidence="1">
    <location>
        <position position="139"/>
    </location>
</feature>
<gene>
    <name evidence="1" type="primary">truA</name>
    <name type="ordered locus">Ent638_2867</name>
</gene>
<evidence type="ECO:0000255" key="1">
    <source>
        <dbReference type="HAMAP-Rule" id="MF_00171"/>
    </source>
</evidence>
<comment type="function">
    <text evidence="1">Formation of pseudouridine at positions 38, 39 and 40 in the anticodon stem and loop of transfer RNAs.</text>
</comment>
<comment type="catalytic activity">
    <reaction evidence="1">
        <text>uridine(38/39/40) in tRNA = pseudouridine(38/39/40) in tRNA</text>
        <dbReference type="Rhea" id="RHEA:22376"/>
        <dbReference type="Rhea" id="RHEA-COMP:10085"/>
        <dbReference type="Rhea" id="RHEA-COMP:10087"/>
        <dbReference type="ChEBI" id="CHEBI:65314"/>
        <dbReference type="ChEBI" id="CHEBI:65315"/>
        <dbReference type="EC" id="5.4.99.12"/>
    </reaction>
</comment>
<comment type="subunit">
    <text evidence="1">Homodimer.</text>
</comment>
<comment type="similarity">
    <text evidence="1">Belongs to the tRNA pseudouridine synthase TruA family.</text>
</comment>
<protein>
    <recommendedName>
        <fullName evidence="1">tRNA pseudouridine synthase A</fullName>
        <ecNumber evidence="1">5.4.99.12</ecNumber>
    </recommendedName>
    <alternativeName>
        <fullName evidence="1">tRNA pseudouridine(38-40) synthase</fullName>
    </alternativeName>
    <alternativeName>
        <fullName evidence="1">tRNA pseudouridylate synthase I</fullName>
    </alternativeName>
    <alternativeName>
        <fullName evidence="1">tRNA-uridine isomerase I</fullName>
    </alternativeName>
</protein>
<proteinExistence type="inferred from homology"/>
<dbReference type="EC" id="5.4.99.12" evidence="1"/>
<dbReference type="EMBL" id="CP000653">
    <property type="protein sequence ID" value="ABP61532.1"/>
    <property type="molecule type" value="Genomic_DNA"/>
</dbReference>
<dbReference type="RefSeq" id="WP_015959865.1">
    <property type="nucleotide sequence ID" value="NC_009436.1"/>
</dbReference>
<dbReference type="SMR" id="A4WCV2"/>
<dbReference type="STRING" id="399742.Ent638_2867"/>
<dbReference type="KEGG" id="ent:Ent638_2867"/>
<dbReference type="eggNOG" id="COG0101">
    <property type="taxonomic scope" value="Bacteria"/>
</dbReference>
<dbReference type="HOGENOM" id="CLU_014673_0_2_6"/>
<dbReference type="OrthoDB" id="9811823at2"/>
<dbReference type="Proteomes" id="UP000000230">
    <property type="component" value="Chromosome"/>
</dbReference>
<dbReference type="GO" id="GO:0003723">
    <property type="term" value="F:RNA binding"/>
    <property type="evidence" value="ECO:0007669"/>
    <property type="project" value="InterPro"/>
</dbReference>
<dbReference type="GO" id="GO:0160147">
    <property type="term" value="F:tRNA pseudouridine(38-40) synthase activity"/>
    <property type="evidence" value="ECO:0007669"/>
    <property type="project" value="UniProtKB-EC"/>
</dbReference>
<dbReference type="GO" id="GO:0031119">
    <property type="term" value="P:tRNA pseudouridine synthesis"/>
    <property type="evidence" value="ECO:0007669"/>
    <property type="project" value="UniProtKB-UniRule"/>
</dbReference>
<dbReference type="CDD" id="cd02570">
    <property type="entry name" value="PseudoU_synth_EcTruA"/>
    <property type="match status" value="1"/>
</dbReference>
<dbReference type="FunFam" id="3.30.70.580:FF:000001">
    <property type="entry name" value="tRNA pseudouridine synthase A"/>
    <property type="match status" value="1"/>
</dbReference>
<dbReference type="FunFam" id="3.30.70.660:FF:000001">
    <property type="entry name" value="tRNA pseudouridine synthase A"/>
    <property type="match status" value="1"/>
</dbReference>
<dbReference type="Gene3D" id="3.30.70.660">
    <property type="entry name" value="Pseudouridine synthase I, catalytic domain, C-terminal subdomain"/>
    <property type="match status" value="1"/>
</dbReference>
<dbReference type="Gene3D" id="3.30.70.580">
    <property type="entry name" value="Pseudouridine synthase I, catalytic domain, N-terminal subdomain"/>
    <property type="match status" value="1"/>
</dbReference>
<dbReference type="HAMAP" id="MF_00171">
    <property type="entry name" value="TruA"/>
    <property type="match status" value="1"/>
</dbReference>
<dbReference type="InterPro" id="IPR020103">
    <property type="entry name" value="PsdUridine_synth_cat_dom_sf"/>
</dbReference>
<dbReference type="InterPro" id="IPR001406">
    <property type="entry name" value="PsdUridine_synth_TruA"/>
</dbReference>
<dbReference type="InterPro" id="IPR020097">
    <property type="entry name" value="PsdUridine_synth_TruA_a/b_dom"/>
</dbReference>
<dbReference type="InterPro" id="IPR020095">
    <property type="entry name" value="PsdUridine_synth_TruA_C"/>
</dbReference>
<dbReference type="InterPro" id="IPR020094">
    <property type="entry name" value="TruA/RsuA/RluB/E/F_N"/>
</dbReference>
<dbReference type="NCBIfam" id="TIGR00071">
    <property type="entry name" value="hisT_truA"/>
    <property type="match status" value="1"/>
</dbReference>
<dbReference type="PANTHER" id="PTHR11142">
    <property type="entry name" value="PSEUDOURIDYLATE SYNTHASE"/>
    <property type="match status" value="1"/>
</dbReference>
<dbReference type="PANTHER" id="PTHR11142:SF0">
    <property type="entry name" value="TRNA PSEUDOURIDINE SYNTHASE-LIKE 1"/>
    <property type="match status" value="1"/>
</dbReference>
<dbReference type="Pfam" id="PF01416">
    <property type="entry name" value="PseudoU_synth_1"/>
    <property type="match status" value="2"/>
</dbReference>
<dbReference type="PIRSF" id="PIRSF001430">
    <property type="entry name" value="tRNA_psdUrid_synth"/>
    <property type="match status" value="1"/>
</dbReference>
<dbReference type="SUPFAM" id="SSF55120">
    <property type="entry name" value="Pseudouridine synthase"/>
    <property type="match status" value="1"/>
</dbReference>